<sequence length="1322" mass="140230">MSRRKQAKPQHFQSDPEVASLPRRDGDTEKGQPSRPTKSKDAHVCGRCCAEFFELSDLLLHKKSCTKNQLVLIVNESPASPAKTFPPGPSLNDPDDQMKDAANKADQEDCSDLSEPKGLDREESMEVEVPVATTTTTTTGGSGGSGGSTLSGVTNITTPSCHSGCSSGTSAITTSLPQLGDLTTLGNFSVINSNVIIENLQSTKVAVAQFSQEARCGGASGGKLLISTLMEQLLALQQQQIHQLQLIEQIRHQILLLASQSADLPAAPSIPSQGTLRTSANPLTTLSSHLSQQLAVAAGLAQSLASQSANISGVKQLPHVQLPQSSSGTSIVPPSGGTSPNMSIVTAAVPTPSSEKVASNAGASHVSSPAVSASSSPAFAISSLLSPESNPLLPQPTPANAVFPTPLPNIATTAEDLNSLSALAQQRKSKPPNVTAFEAKSTSDEAFFKHKCRFCAKVFGSDSALQIHLRSHTGERPFKCNICGNRFSTKGNLKVHFQRHKEKYPHIQMNPYPVPEHLDNVPTSTGIPYGMSIPSEKPVTSWLDTKPVLPTLTTSVGLPLPPTLPSLTPFIKTEEPAPIPISHSAASPQGSVKSDSGAPDLATRNPSGVPEEVEGSAVPPFGGKGEESNMASSAVPTAGNSTLNSPVADGGPGGTTFTNPLLPLMSEQFKAKFPFGGLLDSAQASETSKLQQLVENIDKKATDPNECIICHRVLSCQSALKMHYRTHTGERPFKCKICGRAFTTKGNLKTHYSVHRAMPPLRVQHSCPICQKKFTNAVVLQQHIRMHMGGQIPNTPVPDNYPESMESDTGSFDEKNFDDLDNFSDENMEECPEGSIPDTPKSADASQDSLSSSPLPLEMSSIAALENQMKMINAGLAEQLQASLKSVENGSMEGDVLTNDSSSVGGDMESQSAGSPAISESTSSMQALSPSNSTQEFHKSPGMEEKPQRVGPGEFANGLSPTPVNGGALDLTSSHAEKIIKEDSLGILFPFRDRGKFKNTACDICGKTFACQSALDIHYRSHTKERPFICTVCNRGFSTKGNLKQHMLTHQMRDLPSQLFEPSSNLGPNQNSAVIPANSLSSLIKTEVNGFVHVSPQDSKDAPTSHVPQGPLSSSATSPVLLPALPRRTPKQHYCNTCGKTFSSSSALQIHERTHTGEKPFACTICGRAFTTKGNLKVHMGTHMWNSTPARRGRRLSVDGPMTFLGGNPVKFPEMFQKDLAARSGSGDPSSFWNQYTAALSNGLAMKANEISVIQNGGIPPIPGSLGSGSSPISGLTGNVEKLGNSEPSAPLAGLEKMASSENGTNFRFTRFVEDSKEIVTS</sequence>
<keyword id="KW-0238">DNA-binding</keyword>
<keyword id="KW-1017">Isopeptide bond</keyword>
<keyword id="KW-0479">Metal-binding</keyword>
<keyword id="KW-0539">Nucleus</keyword>
<keyword id="KW-0597">Phosphoprotein</keyword>
<keyword id="KW-1185">Reference proteome</keyword>
<keyword id="KW-0677">Repeat</keyword>
<keyword id="KW-0678">Repressor</keyword>
<keyword id="KW-0804">Transcription</keyword>
<keyword id="KW-0805">Transcription regulation</keyword>
<keyword id="KW-0832">Ubl conjugation</keyword>
<keyword id="KW-0862">Zinc</keyword>
<keyword id="KW-0863">Zinc-finger</keyword>
<protein>
    <recommendedName>
        <fullName>Sal-like protein 1</fullName>
    </recommendedName>
    <alternativeName>
        <fullName>Zinc finger protein Spalt-3</fullName>
        <shortName>Sal-3</shortName>
        <shortName>mSal-3</shortName>
    </alternativeName>
</protein>
<organism>
    <name type="scientific">Mus musculus</name>
    <name type="common">Mouse</name>
    <dbReference type="NCBI Taxonomy" id="10090"/>
    <lineage>
        <taxon>Eukaryota</taxon>
        <taxon>Metazoa</taxon>
        <taxon>Chordata</taxon>
        <taxon>Craniata</taxon>
        <taxon>Vertebrata</taxon>
        <taxon>Euteleostomi</taxon>
        <taxon>Mammalia</taxon>
        <taxon>Eutheria</taxon>
        <taxon>Euarchontoglires</taxon>
        <taxon>Glires</taxon>
        <taxon>Rodentia</taxon>
        <taxon>Myomorpha</taxon>
        <taxon>Muroidea</taxon>
        <taxon>Muridae</taxon>
        <taxon>Murinae</taxon>
        <taxon>Mus</taxon>
        <taxon>Mus</taxon>
    </lineage>
</organism>
<accession>Q9ER74</accession>
<accession>Q920R5</accession>
<evidence type="ECO:0000250" key="1">
    <source>
        <dbReference type="UniProtKB" id="Q9NSC2"/>
    </source>
</evidence>
<evidence type="ECO:0000255" key="2">
    <source>
        <dbReference type="PROSITE-ProRule" id="PRU00042"/>
    </source>
</evidence>
<evidence type="ECO:0000256" key="3">
    <source>
        <dbReference type="SAM" id="MobiDB-lite"/>
    </source>
</evidence>
<evidence type="ECO:0000269" key="4">
    <source>
    </source>
</evidence>
<evidence type="ECO:0000269" key="5">
    <source>
    </source>
</evidence>
<evidence type="ECO:0000269" key="6">
    <source>
    </source>
</evidence>
<evidence type="ECO:0000303" key="7">
    <source>
    </source>
</evidence>
<evidence type="ECO:0000305" key="8"/>
<evidence type="ECO:0007744" key="9">
    <source>
    </source>
</evidence>
<name>SALL1_MOUSE</name>
<dbReference type="EMBL" id="AJ271914">
    <property type="protein sequence ID" value="CAC09602.1"/>
    <property type="molecule type" value="Genomic_DNA"/>
</dbReference>
<dbReference type="EMBL" id="AJ271915">
    <property type="protein sequence ID" value="CAC09602.1"/>
    <property type="status" value="JOINED"/>
    <property type="molecule type" value="Genomic_DNA"/>
</dbReference>
<dbReference type="EMBL" id="AB051409">
    <property type="protein sequence ID" value="BAB55673.1"/>
    <property type="molecule type" value="mRNA"/>
</dbReference>
<dbReference type="DIP" id="DIP-54906N"/>
<dbReference type="FunCoup" id="Q9ER74">
    <property type="interactions" value="856"/>
</dbReference>
<dbReference type="IntAct" id="Q9ER74">
    <property type="interactions" value="12"/>
</dbReference>
<dbReference type="STRING" id="10090.ENSMUSP00000034090"/>
<dbReference type="GlyGen" id="Q9ER74">
    <property type="glycosylation" value="12 sites, 1 O-linked glycan (8 sites)"/>
</dbReference>
<dbReference type="iPTMnet" id="Q9ER74"/>
<dbReference type="PhosphoSitePlus" id="Q9ER74"/>
<dbReference type="PaxDb" id="10090-ENSMUSP00000034090"/>
<dbReference type="ProteomicsDB" id="255453"/>
<dbReference type="AGR" id="MGI:1889585"/>
<dbReference type="MGI" id="MGI:1889585">
    <property type="gene designation" value="Sall1"/>
</dbReference>
<dbReference type="eggNOG" id="KOG1074">
    <property type="taxonomic scope" value="Eukaryota"/>
</dbReference>
<dbReference type="InParanoid" id="Q9ER74"/>
<dbReference type="PhylomeDB" id="Q9ER74"/>
<dbReference type="ChiTaRS" id="Sall1">
    <property type="organism name" value="mouse"/>
</dbReference>
<dbReference type="PRO" id="PR:Q9ER74"/>
<dbReference type="Proteomes" id="UP000000589">
    <property type="component" value="Unplaced"/>
</dbReference>
<dbReference type="RNAct" id="Q9ER74">
    <property type="molecule type" value="protein"/>
</dbReference>
<dbReference type="GO" id="GO:0000792">
    <property type="term" value="C:heterochromatin"/>
    <property type="evidence" value="ECO:0000314"/>
    <property type="project" value="MGI"/>
</dbReference>
<dbReference type="GO" id="GO:0005654">
    <property type="term" value="C:nucleoplasm"/>
    <property type="evidence" value="ECO:0000304"/>
    <property type="project" value="Reactome"/>
</dbReference>
<dbReference type="GO" id="GO:0005634">
    <property type="term" value="C:nucleus"/>
    <property type="evidence" value="ECO:0000314"/>
    <property type="project" value="MGI"/>
</dbReference>
<dbReference type="GO" id="GO:0016581">
    <property type="term" value="C:NuRD complex"/>
    <property type="evidence" value="ECO:0000314"/>
    <property type="project" value="MGI"/>
</dbReference>
<dbReference type="GO" id="GO:0003682">
    <property type="term" value="F:chromatin binding"/>
    <property type="evidence" value="ECO:0000314"/>
    <property type="project" value="MGI"/>
</dbReference>
<dbReference type="GO" id="GO:0000987">
    <property type="term" value="F:cis-regulatory region sequence-specific DNA binding"/>
    <property type="evidence" value="ECO:0000314"/>
    <property type="project" value="BHF-UCL"/>
</dbReference>
<dbReference type="GO" id="GO:0003677">
    <property type="term" value="F:DNA binding"/>
    <property type="evidence" value="ECO:0000314"/>
    <property type="project" value="MGI"/>
</dbReference>
<dbReference type="GO" id="GO:0000981">
    <property type="term" value="F:DNA-binding transcription factor activity, RNA polymerase II-specific"/>
    <property type="evidence" value="ECO:0000314"/>
    <property type="project" value="BHF-UCL"/>
</dbReference>
<dbReference type="GO" id="GO:0044877">
    <property type="term" value="F:protein-containing complex binding"/>
    <property type="evidence" value="ECO:0000353"/>
    <property type="project" value="UniProtKB"/>
</dbReference>
<dbReference type="GO" id="GO:0061629">
    <property type="term" value="F:RNA polymerase II-specific DNA-binding transcription factor binding"/>
    <property type="evidence" value="ECO:0000353"/>
    <property type="project" value="BHF-UCL"/>
</dbReference>
<dbReference type="GO" id="GO:0008270">
    <property type="term" value="F:zinc ion binding"/>
    <property type="evidence" value="ECO:0007669"/>
    <property type="project" value="UniProtKB-KW"/>
</dbReference>
<dbReference type="GO" id="GO:0001658">
    <property type="term" value="P:branching involved in ureteric bud morphogenesis"/>
    <property type="evidence" value="ECO:0000315"/>
    <property type="project" value="UniProtKB"/>
</dbReference>
<dbReference type="GO" id="GO:0021953">
    <property type="term" value="P:central nervous system neuron differentiation"/>
    <property type="evidence" value="ECO:0000315"/>
    <property type="project" value="MGI"/>
</dbReference>
<dbReference type="GO" id="GO:0042733">
    <property type="term" value="P:embryonic digit morphogenesis"/>
    <property type="evidence" value="ECO:0000315"/>
    <property type="project" value="UniProtKB"/>
</dbReference>
<dbReference type="GO" id="GO:0035136">
    <property type="term" value="P:forelimb morphogenesis"/>
    <property type="evidence" value="ECO:0000316"/>
    <property type="project" value="MGI"/>
</dbReference>
<dbReference type="GO" id="GO:0097154">
    <property type="term" value="P:GABAergic neuron differentiation"/>
    <property type="evidence" value="ECO:0000315"/>
    <property type="project" value="MGI"/>
</dbReference>
<dbReference type="GO" id="GO:0035137">
    <property type="term" value="P:hindlimb morphogenesis"/>
    <property type="evidence" value="ECO:0000316"/>
    <property type="project" value="MGI"/>
</dbReference>
<dbReference type="GO" id="GO:0031129">
    <property type="term" value="P:inductive cell-cell signaling"/>
    <property type="evidence" value="ECO:0000315"/>
    <property type="project" value="MGI"/>
</dbReference>
<dbReference type="GO" id="GO:0072073">
    <property type="term" value="P:kidney epithelium development"/>
    <property type="evidence" value="ECO:0000315"/>
    <property type="project" value="UniProtKB"/>
</dbReference>
<dbReference type="GO" id="GO:0072309">
    <property type="term" value="P:mesenchymal stem cell maintenance involved in metanephric nephron morphogenesis"/>
    <property type="evidence" value="ECO:0000315"/>
    <property type="project" value="MGI"/>
</dbReference>
<dbReference type="GO" id="GO:0003337">
    <property type="term" value="P:mesenchymal to epithelial transition involved in metanephros morphogenesis"/>
    <property type="evidence" value="ECO:0000315"/>
    <property type="project" value="UniProtKB"/>
</dbReference>
<dbReference type="GO" id="GO:0045892">
    <property type="term" value="P:negative regulation of DNA-templated transcription"/>
    <property type="evidence" value="ECO:0000314"/>
    <property type="project" value="UniProtKB"/>
</dbReference>
<dbReference type="GO" id="GO:2000384">
    <property type="term" value="P:negative regulation of ectoderm development"/>
    <property type="evidence" value="ECO:0000315"/>
    <property type="project" value="BHF-UCL"/>
</dbReference>
<dbReference type="GO" id="GO:0003340">
    <property type="term" value="P:negative regulation of mesenchymal to epithelial transition involved in metanephros morphogenesis"/>
    <property type="evidence" value="ECO:0000315"/>
    <property type="project" value="MGI"/>
</dbReference>
<dbReference type="GO" id="GO:2000381">
    <property type="term" value="P:negative regulation of mesoderm development"/>
    <property type="evidence" value="ECO:0000315"/>
    <property type="project" value="BHF-UCL"/>
</dbReference>
<dbReference type="GO" id="GO:0045879">
    <property type="term" value="P:negative regulation of smoothened signaling pathway"/>
    <property type="evidence" value="ECO:0000316"/>
    <property type="project" value="MGI"/>
</dbReference>
<dbReference type="GO" id="GO:0000122">
    <property type="term" value="P:negative regulation of transcription by RNA polymerase II"/>
    <property type="evidence" value="ECO:0000314"/>
    <property type="project" value="UniProtKB"/>
</dbReference>
<dbReference type="GO" id="GO:0001843">
    <property type="term" value="P:neural tube closure"/>
    <property type="evidence" value="ECO:0000316"/>
    <property type="project" value="MGI"/>
</dbReference>
<dbReference type="GO" id="GO:0021915">
    <property type="term" value="P:neural tube development"/>
    <property type="evidence" value="ECO:0000316"/>
    <property type="project" value="MGI"/>
</dbReference>
<dbReference type="GO" id="GO:0030182">
    <property type="term" value="P:neuron differentiation"/>
    <property type="evidence" value="ECO:0000315"/>
    <property type="project" value="MGI"/>
</dbReference>
<dbReference type="GO" id="GO:0021772">
    <property type="term" value="P:olfactory bulb development"/>
    <property type="evidence" value="ECO:0000315"/>
    <property type="project" value="MGI"/>
</dbReference>
<dbReference type="GO" id="GO:0021889">
    <property type="term" value="P:olfactory bulb interneuron differentiation"/>
    <property type="evidence" value="ECO:0000315"/>
    <property type="project" value="UniProtKB"/>
</dbReference>
<dbReference type="GO" id="GO:0021553">
    <property type="term" value="P:olfactory nerve development"/>
    <property type="evidence" value="ECO:0000315"/>
    <property type="project" value="UniProtKB"/>
</dbReference>
<dbReference type="GO" id="GO:0090190">
    <property type="term" value="P:positive regulation of branching involved in ureteric bud morphogenesis"/>
    <property type="evidence" value="ECO:0000315"/>
    <property type="project" value="MGI"/>
</dbReference>
<dbReference type="GO" id="GO:0045666">
    <property type="term" value="P:positive regulation of neuron differentiation"/>
    <property type="evidence" value="ECO:0000315"/>
    <property type="project" value="MGI"/>
</dbReference>
<dbReference type="GO" id="GO:0045944">
    <property type="term" value="P:positive regulation of transcription by RNA polymerase II"/>
    <property type="evidence" value="ECO:0000314"/>
    <property type="project" value="MGI"/>
</dbReference>
<dbReference type="GO" id="GO:1902692">
    <property type="term" value="P:regulation of neuroblast proliferation"/>
    <property type="evidence" value="ECO:0000315"/>
    <property type="project" value="MGI"/>
</dbReference>
<dbReference type="GO" id="GO:0007224">
    <property type="term" value="P:smoothened signaling pathway"/>
    <property type="evidence" value="ECO:0000316"/>
    <property type="project" value="MGI"/>
</dbReference>
<dbReference type="GO" id="GO:0006366">
    <property type="term" value="P:transcription by RNA polymerase II"/>
    <property type="evidence" value="ECO:0000315"/>
    <property type="project" value="MGI"/>
</dbReference>
<dbReference type="GO" id="GO:0001657">
    <property type="term" value="P:ureteric bud development"/>
    <property type="evidence" value="ECO:0000315"/>
    <property type="project" value="MGI"/>
</dbReference>
<dbReference type="GO" id="GO:0072092">
    <property type="term" value="P:ureteric bud invasion"/>
    <property type="evidence" value="ECO:0000315"/>
    <property type="project" value="UniProtKB"/>
</dbReference>
<dbReference type="GO" id="GO:0003281">
    <property type="term" value="P:ventricular septum development"/>
    <property type="evidence" value="ECO:0000315"/>
    <property type="project" value="UniProtKB"/>
</dbReference>
<dbReference type="CDD" id="cd20908">
    <property type="entry name" value="SUF4-like"/>
    <property type="match status" value="1"/>
</dbReference>
<dbReference type="FunFam" id="3.30.160.60:FF:000708">
    <property type="entry name" value="Sal-like protein 1"/>
    <property type="match status" value="1"/>
</dbReference>
<dbReference type="FunFam" id="3.30.160.60:FF:000689">
    <property type="entry name" value="Spalt like transcription factor 1"/>
    <property type="match status" value="1"/>
</dbReference>
<dbReference type="FunFam" id="3.30.160.60:FF:000025">
    <property type="entry name" value="Spalt-like transcription factor 1"/>
    <property type="match status" value="1"/>
</dbReference>
<dbReference type="FunFam" id="3.30.160.60:FF:000260">
    <property type="entry name" value="Spalt-like transcription factor 1"/>
    <property type="match status" value="1"/>
</dbReference>
<dbReference type="FunFam" id="3.30.160.60:FF:000302">
    <property type="entry name" value="Spalt-like transcription factor 1"/>
    <property type="match status" value="1"/>
</dbReference>
<dbReference type="FunFam" id="3.30.160.60:FF:000341">
    <property type="entry name" value="Spalt-like transcription factor 1"/>
    <property type="match status" value="1"/>
</dbReference>
<dbReference type="FunFam" id="3.30.160.60:FF:000079">
    <property type="entry name" value="Spalt-like transcription factor 3"/>
    <property type="match status" value="1"/>
</dbReference>
<dbReference type="FunFam" id="3.30.160.60:FF:000215">
    <property type="entry name" value="Spalt-like transcription factor 3"/>
    <property type="match status" value="1"/>
</dbReference>
<dbReference type="Gene3D" id="3.30.160.60">
    <property type="entry name" value="Classic Zinc Finger"/>
    <property type="match status" value="8"/>
</dbReference>
<dbReference type="InterPro" id="IPR051565">
    <property type="entry name" value="Sal_C2H2-zinc-finger"/>
</dbReference>
<dbReference type="InterPro" id="IPR036236">
    <property type="entry name" value="Znf_C2H2_sf"/>
</dbReference>
<dbReference type="InterPro" id="IPR013087">
    <property type="entry name" value="Znf_C2H2_type"/>
</dbReference>
<dbReference type="PANTHER" id="PTHR23233">
    <property type="entry name" value="SAL-LIKE PROTEIN"/>
    <property type="match status" value="1"/>
</dbReference>
<dbReference type="PANTHER" id="PTHR23233:SF51">
    <property type="entry name" value="SAL-LIKE PROTEIN 1"/>
    <property type="match status" value="1"/>
</dbReference>
<dbReference type="Pfam" id="PF00096">
    <property type="entry name" value="zf-C2H2"/>
    <property type="match status" value="6"/>
</dbReference>
<dbReference type="Pfam" id="PF12874">
    <property type="entry name" value="zf-met"/>
    <property type="match status" value="1"/>
</dbReference>
<dbReference type="SMART" id="SM00355">
    <property type="entry name" value="ZnF_C2H2"/>
    <property type="match status" value="9"/>
</dbReference>
<dbReference type="SUPFAM" id="SSF57667">
    <property type="entry name" value="beta-beta-alpha zinc fingers"/>
    <property type="match status" value="5"/>
</dbReference>
<dbReference type="PROSITE" id="PS00028">
    <property type="entry name" value="ZINC_FINGER_C2H2_1"/>
    <property type="match status" value="9"/>
</dbReference>
<dbReference type="PROSITE" id="PS50157">
    <property type="entry name" value="ZINC_FINGER_C2H2_2"/>
    <property type="match status" value="9"/>
</dbReference>
<comment type="function">
    <text evidence="4 5">Transcriptional repressor involved in organogenesis (PubMed:11688560, PubMed:11836251). Plays an essential role in ureteric bud invasion during kidney development (PubMed:11688560).</text>
</comment>
<comment type="subunit">
    <text evidence="1 5 6">May associate with NuRD histone deacetylase complex (HDAC) (PubMed:11836251). Interacts with components of HDAC complex including HDAC1, HDAC2, RBBP4, RBPP7, MTA1 and MTA2 (PubMed:11836251). Interacts with CCNQ (By similarity). Interacts with NSD2 (via PHD-type zinc fingers 1, 2 and 3) (PubMed:19483677).</text>
</comment>
<comment type="subcellular location">
    <subcellularLocation>
        <location evidence="5 6">Nucleus</location>
    </subcellularLocation>
</comment>
<comment type="tissue specificity">
    <text evidence="4">Expressed in the metanephric mesenchyme surrounding ureteric bud.</text>
</comment>
<comment type="developmental stage">
    <text evidence="4 6">Expressed in embryonic heart (at protein level) (PubMed:19483677). At 11.5 dpc expressed in limb buds, ventromedial parts of otic vesicles, endocardium, and weakly in the spinal cord and the brain (PubMed:11688560). At 14.5 dpc expressed in limb buds, anorectal region, developing olfactory bulb, nose and eye. At 10.5 dpc, expressed in the nephrogenic primordium (PubMed:11688560). At 11.5 dpc, expressed in mesonephric tubules and Wolffian ducts, and in the metanephric mesenchyme surrounding the ureteric bud (PubMed:11688560). At 14.5 dpc, expressed in the mesenchyme around the ureteric buds and weakly in comma-shaped bodies of metanephric tubules, but not in glomeruli, in the cortical regions of the developing kidney (PubMed:11688560).</text>
</comment>
<comment type="disruption phenotype">
    <text evidence="4">Death at P1 stage (PubMed:11688560). Newborns have either no kidneys or ureters, only one kidney or ureter, or two small kidneys (PubMed:11688560). The remnant kidneys have disorganized cortical structure, shrunken glomeruli, necrotic proximal tubules and multiple cysts (PubMed:11688560). At day 11.5, embryos have an incomplete ureteric bud outgrowth, fail to form tubules in the mesenchyme and show apoptosis of the mesenchyme (PubMed:11688560).</text>
</comment>
<comment type="similarity">
    <text evidence="8">Belongs to the sal C2H2-type zinc-finger protein family.</text>
</comment>
<reference key="1">
    <citation type="journal article" date="2000" name="Cytogenet. Cell Genet.">
        <title>Molecular cloning, chromosomal localization, and expression of the murine SALL1 ortholog Sall-1.</title>
        <authorList>
            <person name="Buck A."/>
            <person name="Archangelo L."/>
            <person name="Dixkens C."/>
            <person name="Kohlhase J."/>
        </authorList>
    </citation>
    <scope>NUCLEOTIDE SEQUENCE [GENOMIC DNA]</scope>
    <source>
        <strain>129/Ola</strain>
    </source>
</reference>
<reference key="2">
    <citation type="journal article" date="2001" name="Development">
        <title>Murine homolog of SALL1 is essential for ureteric bud invasion in kidney development.</title>
        <authorList>
            <person name="Nishinakamura R."/>
            <person name="Matsumoto Y."/>
            <person name="Nakao K."/>
            <person name="Nakamura K."/>
            <person name="Sato A."/>
            <person name="Copeland N.G."/>
            <person name="Gilbert D.J."/>
            <person name="Jenkins N.A."/>
            <person name="Scully S."/>
            <person name="Lacey D.L."/>
            <person name="Katsuki M."/>
            <person name="Asashima M."/>
            <person name="Yokota T."/>
        </authorList>
    </citation>
    <scope>NUCLEOTIDE SEQUENCE [MRNA]</scope>
    <scope>FUNCTION</scope>
    <scope>TISSUE SPECIFICITY</scope>
    <scope>DEVELOPMENTAL STAGE</scope>
    <scope>DISRUPTION PHENOTYPE</scope>
</reference>
<reference key="3">
    <citation type="journal article" date="2002" name="J. Biol. Chem.">
        <title>Murine sall1 represses transcription by recruiting a histone deacetylase complex.</title>
        <authorList>
            <person name="Kiefer S.M."/>
            <person name="McDill B.W."/>
            <person name="Yang J."/>
            <person name="Rauchman M."/>
        </authorList>
    </citation>
    <scope>FUNCTION</scope>
    <scope>INTERACTION WITH HDAC1; HDAC2; RBBP4; RBPP7; MTA1 AND MTA2</scope>
    <scope>SUBCELLULAR LOCATION</scope>
</reference>
<reference key="4">
    <citation type="journal article" date="2006" name="Dev. Biol.">
        <title>The vertebrate spalt genes in development and disease.</title>
        <authorList>
            <person name="Sweetman D."/>
            <person name="Muensterberg A."/>
        </authorList>
    </citation>
    <scope>DOMAIN</scope>
</reference>
<reference key="5">
    <citation type="journal article" date="2009" name="Nature">
        <title>A histone H3 lysine 36 trimethyltransferase links Nkx2-5 to Wolf-Hirschhorn syndrome.</title>
        <authorList>
            <person name="Nimura K."/>
            <person name="Ura K."/>
            <person name="Shiratori H."/>
            <person name="Ikawa M."/>
            <person name="Okabe M."/>
            <person name="Schwartz R.J."/>
            <person name="Kaneda Y."/>
        </authorList>
    </citation>
    <scope>INTERACTION WITH NSD2</scope>
    <scope>SUBCELLULAR LOCATION</scope>
    <scope>DEVELOPMENTAL STAGE</scope>
</reference>
<reference key="6">
    <citation type="journal article" date="2010" name="Cell">
        <title>A tissue-specific atlas of mouse protein phosphorylation and expression.</title>
        <authorList>
            <person name="Huttlin E.L."/>
            <person name="Jedrychowski M.P."/>
            <person name="Elias J.E."/>
            <person name="Goswami T."/>
            <person name="Rad R."/>
            <person name="Beausoleil S.A."/>
            <person name="Villen J."/>
            <person name="Haas W."/>
            <person name="Sowa M.E."/>
            <person name="Gygi S.P."/>
        </authorList>
    </citation>
    <scope>PHOSPHORYLATION [LARGE SCALE ANALYSIS] AT SER-591</scope>
    <scope>IDENTIFICATION BY MASS SPECTROMETRY [LARGE SCALE ANALYSIS]</scope>
    <source>
        <tissue>Kidney</tissue>
        <tissue>Liver</tissue>
    </source>
</reference>
<proteinExistence type="evidence at protein level"/>
<feature type="chain" id="PRO_0000047021" description="Sal-like protein 1">
    <location>
        <begin position="1"/>
        <end position="1322"/>
    </location>
</feature>
<feature type="zinc finger region" description="C2H2-type 1; atypical" evidence="7">
    <location>
        <begin position="43"/>
        <end position="65"/>
    </location>
</feature>
<feature type="zinc finger region" description="C2H2-type 2" evidence="2">
    <location>
        <begin position="450"/>
        <end position="472"/>
    </location>
</feature>
<feature type="zinc finger region" description="C2H2-type 3" evidence="2">
    <location>
        <begin position="478"/>
        <end position="500"/>
    </location>
</feature>
<feature type="zinc finger region" description="C2H2-type 4" evidence="2">
    <location>
        <begin position="705"/>
        <end position="727"/>
    </location>
</feature>
<feature type="zinc finger region" description="C2H2-type 5" evidence="2">
    <location>
        <begin position="733"/>
        <end position="755"/>
    </location>
</feature>
<feature type="zinc finger region" description="C2H2-type 6" evidence="2">
    <location>
        <begin position="765"/>
        <end position="787"/>
    </location>
</feature>
<feature type="zinc finger region" description="C2H2-type 7" evidence="2">
    <location>
        <begin position="1000"/>
        <end position="1022"/>
    </location>
</feature>
<feature type="zinc finger region" description="C2H2-type 8" evidence="2">
    <location>
        <begin position="1028"/>
        <end position="1050"/>
    </location>
</feature>
<feature type="zinc finger region" description="C2H2-type 9" evidence="2">
    <location>
        <begin position="1133"/>
        <end position="1155"/>
    </location>
</feature>
<feature type="zinc finger region" description="C2H2-type 10" evidence="2">
    <location>
        <begin position="1161"/>
        <end position="1183"/>
    </location>
</feature>
<feature type="region of interest" description="Disordered" evidence="3">
    <location>
        <begin position="1"/>
        <end position="41"/>
    </location>
</feature>
<feature type="region of interest" description="Disordered" evidence="3">
    <location>
        <begin position="78"/>
        <end position="128"/>
    </location>
</feature>
<feature type="region of interest" description="Disordered" evidence="3">
    <location>
        <begin position="578"/>
        <end position="659"/>
    </location>
</feature>
<feature type="region of interest" description="Disordered" evidence="3">
    <location>
        <begin position="789"/>
        <end position="855"/>
    </location>
</feature>
<feature type="region of interest" description="Disordered" evidence="3">
    <location>
        <begin position="891"/>
        <end position="961"/>
    </location>
</feature>
<feature type="region of interest" description="Disordered" evidence="3">
    <location>
        <begin position="1094"/>
        <end position="1119"/>
    </location>
</feature>
<feature type="compositionally biased region" description="Basic and acidic residues" evidence="3">
    <location>
        <begin position="22"/>
        <end position="41"/>
    </location>
</feature>
<feature type="compositionally biased region" description="Basic and acidic residues" evidence="3">
    <location>
        <begin position="96"/>
        <end position="107"/>
    </location>
</feature>
<feature type="compositionally biased region" description="Basic and acidic residues" evidence="3">
    <location>
        <begin position="114"/>
        <end position="124"/>
    </location>
</feature>
<feature type="compositionally biased region" description="Polar residues" evidence="3">
    <location>
        <begin position="584"/>
        <end position="594"/>
    </location>
</feature>
<feature type="compositionally biased region" description="Polar residues" evidence="3">
    <location>
        <begin position="629"/>
        <end position="645"/>
    </location>
</feature>
<feature type="compositionally biased region" description="Acidic residues" evidence="3">
    <location>
        <begin position="819"/>
        <end position="832"/>
    </location>
</feature>
<feature type="compositionally biased region" description="Low complexity" evidence="3">
    <location>
        <begin position="842"/>
        <end position="855"/>
    </location>
</feature>
<feature type="compositionally biased region" description="Polar residues" evidence="3">
    <location>
        <begin position="898"/>
        <end position="935"/>
    </location>
</feature>
<feature type="compositionally biased region" description="Basic and acidic residues" evidence="3">
    <location>
        <begin position="936"/>
        <end position="948"/>
    </location>
</feature>
<feature type="modified residue" description="Phosphoserine" evidence="9">
    <location>
        <position position="591"/>
    </location>
</feature>
<feature type="modified residue" description="Phosphoserine" evidence="1">
    <location>
        <position position="594"/>
    </location>
</feature>
<feature type="modified residue" description="Phosphoserine" evidence="1">
    <location>
        <position position="596"/>
    </location>
</feature>
<feature type="modified residue" description="Phosphoserine" evidence="1">
    <location>
        <position position="940"/>
    </location>
</feature>
<feature type="cross-link" description="Glycyl lysine isopeptide (Lys-Gly) (interchain with G-Cter in SUMO2)" evidence="1">
    <location>
        <position position="440"/>
    </location>
</feature>
<feature type="cross-link" description="Glycyl lysine isopeptide (Lys-Gly) (interchain with G-Cter in SUMO2)" evidence="1">
    <location>
        <position position="672"/>
    </location>
</feature>
<feature type="cross-link" description="Glycyl lysine isopeptide (Lys-Gly) (interchain with G-Cter in SUMO2)" evidence="1">
    <location>
        <position position="689"/>
    </location>
</feature>
<feature type="cross-link" description="Glycyl lysine isopeptide (Lys-Gly) (interchain with G-Cter in SUMO2)" evidence="1">
    <location>
        <position position="700"/>
    </location>
</feature>
<feature type="cross-link" description="Glycyl lysine isopeptide (Lys-Gly) (interchain with G-Cter in SUMO2)" evidence="1">
    <location>
        <position position="946"/>
    </location>
</feature>
<feature type="cross-link" description="Glycyl lysine isopeptide (Lys-Gly) (interchain with G-Cter in SUMO2)" evidence="1">
    <location>
        <position position="981"/>
    </location>
</feature>
<feature type="cross-link" description="Glycyl lysine isopeptide (Lys-Gly) (interchain with G-Cter in SUMO2)" evidence="1">
    <location>
        <position position="1085"/>
    </location>
</feature>
<feature type="cross-link" description="Glycyl lysine isopeptide (Lys-Gly) (interchain with G-Cter in SUMO2)" evidence="1">
    <location>
        <position position="1218"/>
    </location>
</feature>
<feature type="cross-link" description="Glycyl lysine isopeptide (Lys-Gly) (interchain with G-Cter in SUMO2)" evidence="1">
    <location>
        <position position="1297"/>
    </location>
</feature>
<feature type="cross-link" description="Glycyl lysine isopeptide (Lys-Gly) (interchain with G-Cter in SUMO2)" evidence="1">
    <location>
        <position position="1317"/>
    </location>
</feature>
<feature type="sequence conflict" description="In Ref. 2." evidence="8" ref="2">
    <original>C</original>
    <variation>S</variation>
    <location>
        <position position="165"/>
    </location>
</feature>
<feature type="sequence conflict" description="In Ref. 2." evidence="8" ref="2">
    <original>S</original>
    <variation>T</variation>
    <location>
        <position position="167"/>
    </location>
</feature>
<feature type="sequence conflict" description="In Ref. 2; BAB55673." evidence="8" ref="2">
    <original>S</original>
    <variation>SS</variation>
    <location>
        <position position="1271"/>
    </location>
</feature>
<gene>
    <name type="primary">Sall1</name>
    <name type="synonym">Sal3</name>
</gene>